<reference key="1">
    <citation type="journal article" date="1991" name="Mol. Gen. Genet.">
        <title>Genetics of streptomycin production in Streptomyces griseus: molecular structure and putative function of genes strELMB2N.</title>
        <authorList>
            <person name="Pissowotzki K."/>
            <person name="Mansouri K."/>
            <person name="Piepersberg W."/>
        </authorList>
    </citation>
    <scope>NUCLEOTIDE SEQUENCE [GENOMIC DNA]</scope>
    <scope>FUNCTION IN BIOSYNTHESIS OF THE STREPTOSE MOIETY OF STREPTOMYCIN</scope>
    <scope>PATHWAY</scope>
    <source>
        <strain>N2-3-11</strain>
    </source>
</reference>
<comment type="function">
    <text evidence="2 5">Involved in the biosynthesis of the dihydrostreptose moiety of streptomycin (PubMed:1661369). Catalyzes the epimerization of the C3' and C5'positions of dTDP-6-deoxy-D-xylo-4-hexulose, forming dTDP-6-deoxy-L-lyxo-4-hexulose (By similarity).</text>
</comment>
<comment type="catalytic activity">
    <reaction evidence="2">
        <text>dTDP-4-dehydro-6-deoxy-alpha-D-glucose = dTDP-4-dehydro-beta-L-rhamnose</text>
        <dbReference type="Rhea" id="RHEA:16969"/>
        <dbReference type="ChEBI" id="CHEBI:57649"/>
        <dbReference type="ChEBI" id="CHEBI:62830"/>
        <dbReference type="EC" id="5.1.3.13"/>
    </reaction>
</comment>
<comment type="pathway">
    <text evidence="1">Carbohydrate biosynthesis; dTDP-L-rhamnose biosynthesis.</text>
</comment>
<comment type="pathway">
    <text evidence="8">Antibiotic biosynthesis; streptomycin biosynthesis.</text>
</comment>
<comment type="similarity">
    <text evidence="7">Belongs to the dTDP-4-dehydrorhamnose 3,5-epimerase family.</text>
</comment>
<gene>
    <name evidence="6" type="primary">strM</name>
</gene>
<accession>P29783</accession>
<evidence type="ECO:0000250" key="1">
    <source>
        <dbReference type="UniProtKB" id="P26394"/>
    </source>
</evidence>
<evidence type="ECO:0000250" key="2">
    <source>
        <dbReference type="UniProtKB" id="P9WH11"/>
    </source>
</evidence>
<evidence type="ECO:0000250" key="3">
    <source>
        <dbReference type="UniProtKB" id="Q5SFD1"/>
    </source>
</evidence>
<evidence type="ECO:0000250" key="4">
    <source>
        <dbReference type="UniProtKB" id="Q9HU21"/>
    </source>
</evidence>
<evidence type="ECO:0000269" key="5">
    <source>
    </source>
</evidence>
<evidence type="ECO:0000303" key="6">
    <source>
    </source>
</evidence>
<evidence type="ECO:0000305" key="7"/>
<evidence type="ECO:0000305" key="8">
    <source>
    </source>
</evidence>
<proteinExistence type="evidence at protein level"/>
<name>RMLC_STRGR</name>
<feature type="chain" id="PRO_0000207983" description="dTDP-4-dehydrorhamnose 3,5-epimerase">
    <location>
        <begin position="1"/>
        <end position="200"/>
    </location>
</feature>
<feature type="active site" description="Proton acceptor" evidence="4">
    <location>
        <position position="60"/>
    </location>
</feature>
<feature type="active site" description="Proton donor" evidence="4">
    <location>
        <position position="129"/>
    </location>
</feature>
<feature type="binding site" evidence="4">
    <location>
        <position position="21"/>
    </location>
    <ligand>
        <name>substrate</name>
    </ligand>
</feature>
<feature type="binding site" evidence="4">
    <location>
        <position position="26"/>
    </location>
    <ligand>
        <name>substrate</name>
    </ligand>
</feature>
<feature type="binding site" evidence="4">
    <location>
        <begin position="45"/>
        <end position="47"/>
    </location>
    <ligand>
        <name>substrate</name>
    </ligand>
</feature>
<feature type="binding site" evidence="4">
    <location>
        <position position="57"/>
    </location>
    <ligand>
        <name>substrate</name>
    </ligand>
</feature>
<feature type="binding site" evidence="4">
    <location>
        <position position="70"/>
    </location>
    <ligand>
        <name>substrate</name>
    </ligand>
</feature>
<feature type="binding site" evidence="4">
    <location>
        <position position="116"/>
    </location>
    <ligand>
        <name>substrate</name>
    </ligand>
</feature>
<feature type="binding site" evidence="4">
    <location>
        <position position="140"/>
    </location>
    <ligand>
        <name>substrate</name>
    </ligand>
</feature>
<feature type="binding site" evidence="4">
    <location>
        <position position="165"/>
    </location>
    <ligand>
        <name>substrate</name>
    </ligand>
</feature>
<feature type="site" description="Participates in a stacking interaction with the thymidine ring of dTDP-4-oxo-6-deoxyglucose" evidence="3">
    <location>
        <position position="135"/>
    </location>
</feature>
<sequence length="200" mass="21956">MRPLSVQGAWLSETRAFADDRGEFQELYSARSLRGALGYDPGVAQVNRSVSRRGVLRGVHFAQLPPSQAKYVTCLSGAVLDVVVDIRTGSPTYRAWEAVRLDDPHRSLYVEAGLGHSFMALTDDAVVVYLTSQGYAAGREHGVHPLDPDLGIAWPDGIEPVLSEKDRQAPGIAEMERRGLLPDYEECLAFRRSLCERGTG</sequence>
<organism>
    <name type="scientific">Streptomyces griseus</name>
    <dbReference type="NCBI Taxonomy" id="1911"/>
    <lineage>
        <taxon>Bacteria</taxon>
        <taxon>Bacillati</taxon>
        <taxon>Actinomycetota</taxon>
        <taxon>Actinomycetes</taxon>
        <taxon>Kitasatosporales</taxon>
        <taxon>Streptomycetaceae</taxon>
        <taxon>Streptomyces</taxon>
    </lineage>
</organism>
<keyword id="KW-0002">3D-structure</keyword>
<keyword id="KW-0045">Antibiotic biosynthesis</keyword>
<keyword id="KW-0119">Carbohydrate metabolism</keyword>
<keyword id="KW-0413">Isomerase</keyword>
<keyword id="KW-0759">Streptomycin biosynthesis</keyword>
<dbReference type="EC" id="5.1.3.13" evidence="2"/>
<dbReference type="EMBL" id="X62567">
    <property type="protein sequence ID" value="CAA44442.1"/>
    <property type="molecule type" value="Genomic_DNA"/>
</dbReference>
<dbReference type="PIR" id="S18619">
    <property type="entry name" value="XUSMEG"/>
</dbReference>
<dbReference type="RefSeq" id="WP_003970234.1">
    <property type="nucleotide sequence ID" value="NZ_UAVD01000010.1"/>
</dbReference>
<dbReference type="PDB" id="7PWH">
    <property type="method" value="X-ray"/>
    <property type="resolution" value="1.90 A"/>
    <property type="chains" value="AAA=1-200"/>
</dbReference>
<dbReference type="PDB" id="7PWI">
    <property type="method" value="X-ray"/>
    <property type="resolution" value="1.33 A"/>
    <property type="chains" value="AAA=1-200"/>
</dbReference>
<dbReference type="PDBsum" id="7PWH"/>
<dbReference type="PDBsum" id="7PWI"/>
<dbReference type="SMR" id="P29783"/>
<dbReference type="OMA" id="EYWFPEL"/>
<dbReference type="OrthoDB" id="9800680at2"/>
<dbReference type="UniPathway" id="UPA00066"/>
<dbReference type="UniPathway" id="UPA00124"/>
<dbReference type="GO" id="GO:0005829">
    <property type="term" value="C:cytosol"/>
    <property type="evidence" value="ECO:0007669"/>
    <property type="project" value="TreeGrafter"/>
</dbReference>
<dbReference type="GO" id="GO:0008830">
    <property type="term" value="F:dTDP-4-dehydrorhamnose 3,5-epimerase activity"/>
    <property type="evidence" value="ECO:0007669"/>
    <property type="project" value="UniProtKB-EC"/>
</dbReference>
<dbReference type="GO" id="GO:0019305">
    <property type="term" value="P:dTDP-rhamnose biosynthetic process"/>
    <property type="evidence" value="ECO:0007669"/>
    <property type="project" value="UniProtKB-UniPathway"/>
</dbReference>
<dbReference type="GO" id="GO:0000271">
    <property type="term" value="P:polysaccharide biosynthetic process"/>
    <property type="evidence" value="ECO:0007669"/>
    <property type="project" value="TreeGrafter"/>
</dbReference>
<dbReference type="GO" id="GO:0019872">
    <property type="term" value="P:streptomycin biosynthetic process"/>
    <property type="evidence" value="ECO:0007669"/>
    <property type="project" value="UniProtKB-UniPathway"/>
</dbReference>
<dbReference type="CDD" id="cd00438">
    <property type="entry name" value="cupin_RmlC"/>
    <property type="match status" value="1"/>
</dbReference>
<dbReference type="Gene3D" id="2.60.120.10">
    <property type="entry name" value="Jelly Rolls"/>
    <property type="match status" value="1"/>
</dbReference>
<dbReference type="InterPro" id="IPR000888">
    <property type="entry name" value="RmlC-like"/>
</dbReference>
<dbReference type="InterPro" id="IPR014710">
    <property type="entry name" value="RmlC-like_jellyroll"/>
</dbReference>
<dbReference type="InterPro" id="IPR011051">
    <property type="entry name" value="RmlC_Cupin_sf"/>
</dbReference>
<dbReference type="PANTHER" id="PTHR21047">
    <property type="entry name" value="DTDP-6-DEOXY-D-GLUCOSE-3,5 EPIMERASE"/>
    <property type="match status" value="1"/>
</dbReference>
<dbReference type="PANTHER" id="PTHR21047:SF2">
    <property type="entry name" value="THYMIDINE DIPHOSPHO-4-KETO-RHAMNOSE 3,5-EPIMERASE"/>
    <property type="match status" value="1"/>
</dbReference>
<dbReference type="Pfam" id="PF00908">
    <property type="entry name" value="dTDP_sugar_isom"/>
    <property type="match status" value="1"/>
</dbReference>
<dbReference type="SUPFAM" id="SSF51182">
    <property type="entry name" value="RmlC-like cupins"/>
    <property type="match status" value="1"/>
</dbReference>
<protein>
    <recommendedName>
        <fullName evidence="2">dTDP-4-dehydrorhamnose 3,5-epimerase</fullName>
        <ecNumber evidence="2">5.1.3.13</ecNumber>
    </recommendedName>
    <alternativeName>
        <fullName evidence="2">Thymidine diphospho-4-keto-rhamnose 3,5-epimerase</fullName>
    </alternativeName>
    <alternativeName>
        <fullName evidence="6">dTDP-4-keto-6-deoxyglucose 3,5-epimerase</fullName>
    </alternativeName>
    <alternativeName>
        <fullName evidence="2">dTDP-6-deoxy-D-xylo-4-hexulose 3,5-epimerase</fullName>
    </alternativeName>
    <alternativeName>
        <fullName evidence="2">dTDP-L-rhamnose synthase</fullName>
    </alternativeName>
</protein>